<keyword id="KW-0221">Differentiation</keyword>
<keyword id="KW-0472">Membrane</keyword>
<keyword id="KW-0496">Mitochondrion</keyword>
<keyword id="KW-1000">Mitochondrion outer membrane</keyword>
<keyword id="KW-0539">Nucleus</keyword>
<keyword id="KW-1185">Reference proteome</keyword>
<keyword id="KW-0677">Repeat</keyword>
<keyword id="KW-0744">Spermatogenesis</keyword>
<evidence type="ECO:0000250" key="1">
    <source>
        <dbReference type="UniProtKB" id="Q5T9G4"/>
    </source>
</evidence>
<evidence type="ECO:0000256" key="2">
    <source>
        <dbReference type="SAM" id="MobiDB-lite"/>
    </source>
</evidence>
<evidence type="ECO:0000269" key="3">
    <source>
    </source>
</evidence>
<evidence type="ECO:0000269" key="4">
    <source>
    </source>
</evidence>
<evidence type="ECO:0000305" key="5"/>
<dbReference type="EMBL" id="AK005672">
    <property type="protein sequence ID" value="BAB24180.1"/>
    <property type="molecule type" value="mRNA"/>
</dbReference>
<dbReference type="EMBL" id="AK015756">
    <property type="protein sequence ID" value="BAB29960.1"/>
    <property type="molecule type" value="mRNA"/>
</dbReference>
<dbReference type="EMBL" id="BC049559">
    <property type="protein sequence ID" value="AAH49559.1"/>
    <property type="molecule type" value="mRNA"/>
</dbReference>
<dbReference type="CCDS" id="CCDS28579.1"/>
<dbReference type="RefSeq" id="NP_080566.2">
    <property type="nucleotide sequence ID" value="NM_026290.3"/>
</dbReference>
<dbReference type="SMR" id="Q80X86"/>
<dbReference type="BioGRID" id="212332">
    <property type="interactions" value="1"/>
</dbReference>
<dbReference type="FunCoup" id="Q80X86">
    <property type="interactions" value="119"/>
</dbReference>
<dbReference type="STRING" id="10090.ENSMUSP00000156794"/>
<dbReference type="PhosphoSitePlus" id="Q80X86"/>
<dbReference type="PaxDb" id="10090-ENSMUSP00000025060"/>
<dbReference type="ProteomicsDB" id="277290"/>
<dbReference type="Antibodypedia" id="29544">
    <property type="antibodies" value="26 antibodies from 8 providers"/>
</dbReference>
<dbReference type="Ensembl" id="ENSMUST00000233923.2">
    <property type="protein sequence ID" value="ENSMUSP00000156794.2"/>
    <property type="gene ID" value="ENSMUSG00000024223.4"/>
</dbReference>
<dbReference type="GeneID" id="67645"/>
<dbReference type="KEGG" id="mmu:67645"/>
<dbReference type="UCSC" id="uc008brd.2">
    <property type="organism name" value="mouse"/>
</dbReference>
<dbReference type="AGR" id="MGI:1914895"/>
<dbReference type="CTD" id="221481"/>
<dbReference type="MGI" id="MGI:1914895">
    <property type="gene designation" value="Armc12"/>
</dbReference>
<dbReference type="VEuPathDB" id="HostDB:ENSMUSG00000024223"/>
<dbReference type="eggNOG" id="ENOG502QTRM">
    <property type="taxonomic scope" value="Eukaryota"/>
</dbReference>
<dbReference type="GeneTree" id="ENSGT00390000003856"/>
<dbReference type="HOGENOM" id="CLU_070346_0_0_1"/>
<dbReference type="InParanoid" id="Q80X86"/>
<dbReference type="OMA" id="WDTELHV"/>
<dbReference type="OrthoDB" id="59722at9989"/>
<dbReference type="PhylomeDB" id="Q80X86"/>
<dbReference type="TreeFam" id="TF337134"/>
<dbReference type="BioGRID-ORCS" id="67645">
    <property type="hits" value="1 hit in 76 CRISPR screens"/>
</dbReference>
<dbReference type="PRO" id="PR:Q80X86"/>
<dbReference type="Proteomes" id="UP000000589">
    <property type="component" value="Chromosome 17"/>
</dbReference>
<dbReference type="RNAct" id="Q80X86">
    <property type="molecule type" value="protein"/>
</dbReference>
<dbReference type="Bgee" id="ENSMUSG00000024223">
    <property type="expression patterns" value="Expressed in seminiferous tubule of testis and 22 other cell types or tissues"/>
</dbReference>
<dbReference type="ExpressionAtlas" id="Q80X86">
    <property type="expression patterns" value="baseline and differential"/>
</dbReference>
<dbReference type="GO" id="GO:0005741">
    <property type="term" value="C:mitochondrial outer membrane"/>
    <property type="evidence" value="ECO:0000314"/>
    <property type="project" value="UniProtKB"/>
</dbReference>
<dbReference type="GO" id="GO:0005634">
    <property type="term" value="C:nucleus"/>
    <property type="evidence" value="ECO:0000250"/>
    <property type="project" value="UniProtKB"/>
</dbReference>
<dbReference type="GO" id="GO:0030317">
    <property type="term" value="P:flagellated sperm motility"/>
    <property type="evidence" value="ECO:0000315"/>
    <property type="project" value="UniProtKB"/>
</dbReference>
<dbReference type="GO" id="GO:0030307">
    <property type="term" value="P:positive regulation of cell growth"/>
    <property type="evidence" value="ECO:0000250"/>
    <property type="project" value="UniProtKB"/>
</dbReference>
<dbReference type="GO" id="GO:0120317">
    <property type="term" value="P:sperm mitochondrial sheath assembly"/>
    <property type="evidence" value="ECO:0000315"/>
    <property type="project" value="UniProtKB"/>
</dbReference>
<dbReference type="Gene3D" id="1.25.10.10">
    <property type="entry name" value="Leucine-rich Repeat Variant"/>
    <property type="match status" value="1"/>
</dbReference>
<dbReference type="InterPro" id="IPR011989">
    <property type="entry name" value="ARM-like"/>
</dbReference>
<dbReference type="InterPro" id="IPR006911">
    <property type="entry name" value="ARM-rpt_dom"/>
</dbReference>
<dbReference type="InterPro" id="IPR016024">
    <property type="entry name" value="ARM-type_fold"/>
</dbReference>
<dbReference type="InterPro" id="IPR042834">
    <property type="entry name" value="Armc12"/>
</dbReference>
<dbReference type="PANTHER" id="PTHR47144">
    <property type="entry name" value="ARMADILLO REPEAT-CONTAINING PROTEIN 12"/>
    <property type="match status" value="1"/>
</dbReference>
<dbReference type="PANTHER" id="PTHR47144:SF1">
    <property type="entry name" value="ARMADILLO REPEAT-CONTAINING PROTEIN 12"/>
    <property type="match status" value="1"/>
</dbReference>
<dbReference type="Pfam" id="PF04826">
    <property type="entry name" value="Arm_2"/>
    <property type="match status" value="1"/>
</dbReference>
<dbReference type="SUPFAM" id="SSF48371">
    <property type="entry name" value="ARM repeat"/>
    <property type="match status" value="1"/>
</dbReference>
<feature type="chain" id="PRO_0000230164" description="Armadillo repeat-containing protein 12">
    <location>
        <begin position="1"/>
        <end position="340"/>
    </location>
</feature>
<feature type="repeat" description="ARM 1">
    <location>
        <begin position="100"/>
        <end position="139"/>
    </location>
</feature>
<feature type="repeat" description="ARM 2">
    <location>
        <begin position="179"/>
        <end position="218"/>
    </location>
</feature>
<feature type="repeat" description="ARM 3">
    <location>
        <begin position="278"/>
        <end position="318"/>
    </location>
</feature>
<feature type="region of interest" description="Interaction with TBC1D15" evidence="3">
    <location>
        <begin position="1"/>
        <end position="101"/>
    </location>
</feature>
<feature type="region of interest" description="Disordered" evidence="2">
    <location>
        <begin position="321"/>
        <end position="340"/>
    </location>
</feature>
<feature type="compositionally biased region" description="Low complexity" evidence="2">
    <location>
        <begin position="324"/>
        <end position="340"/>
    </location>
</feature>
<feature type="sequence conflict" description="In Ref. 1; BAB24180." evidence="5" ref="1">
    <original>L</original>
    <variation>V</variation>
    <location>
        <position position="194"/>
    </location>
</feature>
<feature type="sequence conflict" description="In Ref. 1; BAB29960." evidence="5" ref="1">
    <original>S</original>
    <variation>P</variation>
    <location>
        <position position="328"/>
    </location>
</feature>
<reference key="1">
    <citation type="journal article" date="2005" name="Science">
        <title>The transcriptional landscape of the mammalian genome.</title>
        <authorList>
            <person name="Carninci P."/>
            <person name="Kasukawa T."/>
            <person name="Katayama S."/>
            <person name="Gough J."/>
            <person name="Frith M.C."/>
            <person name="Maeda N."/>
            <person name="Oyama R."/>
            <person name="Ravasi T."/>
            <person name="Lenhard B."/>
            <person name="Wells C."/>
            <person name="Kodzius R."/>
            <person name="Shimokawa K."/>
            <person name="Bajic V.B."/>
            <person name="Brenner S.E."/>
            <person name="Batalov S."/>
            <person name="Forrest A.R."/>
            <person name="Zavolan M."/>
            <person name="Davis M.J."/>
            <person name="Wilming L.G."/>
            <person name="Aidinis V."/>
            <person name="Allen J.E."/>
            <person name="Ambesi-Impiombato A."/>
            <person name="Apweiler R."/>
            <person name="Aturaliya R.N."/>
            <person name="Bailey T.L."/>
            <person name="Bansal M."/>
            <person name="Baxter L."/>
            <person name="Beisel K.W."/>
            <person name="Bersano T."/>
            <person name="Bono H."/>
            <person name="Chalk A.M."/>
            <person name="Chiu K.P."/>
            <person name="Choudhary V."/>
            <person name="Christoffels A."/>
            <person name="Clutterbuck D.R."/>
            <person name="Crowe M.L."/>
            <person name="Dalla E."/>
            <person name="Dalrymple B.P."/>
            <person name="de Bono B."/>
            <person name="Della Gatta G."/>
            <person name="di Bernardo D."/>
            <person name="Down T."/>
            <person name="Engstrom P."/>
            <person name="Fagiolini M."/>
            <person name="Faulkner G."/>
            <person name="Fletcher C.F."/>
            <person name="Fukushima T."/>
            <person name="Furuno M."/>
            <person name="Futaki S."/>
            <person name="Gariboldi M."/>
            <person name="Georgii-Hemming P."/>
            <person name="Gingeras T.R."/>
            <person name="Gojobori T."/>
            <person name="Green R.E."/>
            <person name="Gustincich S."/>
            <person name="Harbers M."/>
            <person name="Hayashi Y."/>
            <person name="Hensch T.K."/>
            <person name="Hirokawa N."/>
            <person name="Hill D."/>
            <person name="Huminiecki L."/>
            <person name="Iacono M."/>
            <person name="Ikeo K."/>
            <person name="Iwama A."/>
            <person name="Ishikawa T."/>
            <person name="Jakt M."/>
            <person name="Kanapin A."/>
            <person name="Katoh M."/>
            <person name="Kawasawa Y."/>
            <person name="Kelso J."/>
            <person name="Kitamura H."/>
            <person name="Kitano H."/>
            <person name="Kollias G."/>
            <person name="Krishnan S.P."/>
            <person name="Kruger A."/>
            <person name="Kummerfeld S.K."/>
            <person name="Kurochkin I.V."/>
            <person name="Lareau L.F."/>
            <person name="Lazarevic D."/>
            <person name="Lipovich L."/>
            <person name="Liu J."/>
            <person name="Liuni S."/>
            <person name="McWilliam S."/>
            <person name="Madan Babu M."/>
            <person name="Madera M."/>
            <person name="Marchionni L."/>
            <person name="Matsuda H."/>
            <person name="Matsuzawa S."/>
            <person name="Miki H."/>
            <person name="Mignone F."/>
            <person name="Miyake S."/>
            <person name="Morris K."/>
            <person name="Mottagui-Tabar S."/>
            <person name="Mulder N."/>
            <person name="Nakano N."/>
            <person name="Nakauchi H."/>
            <person name="Ng P."/>
            <person name="Nilsson R."/>
            <person name="Nishiguchi S."/>
            <person name="Nishikawa S."/>
            <person name="Nori F."/>
            <person name="Ohara O."/>
            <person name="Okazaki Y."/>
            <person name="Orlando V."/>
            <person name="Pang K.C."/>
            <person name="Pavan W.J."/>
            <person name="Pavesi G."/>
            <person name="Pesole G."/>
            <person name="Petrovsky N."/>
            <person name="Piazza S."/>
            <person name="Reed J."/>
            <person name="Reid J.F."/>
            <person name="Ring B.Z."/>
            <person name="Ringwald M."/>
            <person name="Rost B."/>
            <person name="Ruan Y."/>
            <person name="Salzberg S.L."/>
            <person name="Sandelin A."/>
            <person name="Schneider C."/>
            <person name="Schoenbach C."/>
            <person name="Sekiguchi K."/>
            <person name="Semple C.A."/>
            <person name="Seno S."/>
            <person name="Sessa L."/>
            <person name="Sheng Y."/>
            <person name="Shibata Y."/>
            <person name="Shimada H."/>
            <person name="Shimada K."/>
            <person name="Silva D."/>
            <person name="Sinclair B."/>
            <person name="Sperling S."/>
            <person name="Stupka E."/>
            <person name="Sugiura K."/>
            <person name="Sultana R."/>
            <person name="Takenaka Y."/>
            <person name="Taki K."/>
            <person name="Tammoja K."/>
            <person name="Tan S.L."/>
            <person name="Tang S."/>
            <person name="Taylor M.S."/>
            <person name="Tegner J."/>
            <person name="Teichmann S.A."/>
            <person name="Ueda H.R."/>
            <person name="van Nimwegen E."/>
            <person name="Verardo R."/>
            <person name="Wei C.L."/>
            <person name="Yagi K."/>
            <person name="Yamanishi H."/>
            <person name="Zabarovsky E."/>
            <person name="Zhu S."/>
            <person name="Zimmer A."/>
            <person name="Hide W."/>
            <person name="Bult C."/>
            <person name="Grimmond S.M."/>
            <person name="Teasdale R.D."/>
            <person name="Liu E.T."/>
            <person name="Brusic V."/>
            <person name="Quackenbush J."/>
            <person name="Wahlestedt C."/>
            <person name="Mattick J.S."/>
            <person name="Hume D.A."/>
            <person name="Kai C."/>
            <person name="Sasaki D."/>
            <person name="Tomaru Y."/>
            <person name="Fukuda S."/>
            <person name="Kanamori-Katayama M."/>
            <person name="Suzuki M."/>
            <person name="Aoki J."/>
            <person name="Arakawa T."/>
            <person name="Iida J."/>
            <person name="Imamura K."/>
            <person name="Itoh M."/>
            <person name="Kato T."/>
            <person name="Kawaji H."/>
            <person name="Kawagashira N."/>
            <person name="Kawashima T."/>
            <person name="Kojima M."/>
            <person name="Kondo S."/>
            <person name="Konno H."/>
            <person name="Nakano K."/>
            <person name="Ninomiya N."/>
            <person name="Nishio T."/>
            <person name="Okada M."/>
            <person name="Plessy C."/>
            <person name="Shibata K."/>
            <person name="Shiraki T."/>
            <person name="Suzuki S."/>
            <person name="Tagami M."/>
            <person name="Waki K."/>
            <person name="Watahiki A."/>
            <person name="Okamura-Oho Y."/>
            <person name="Suzuki H."/>
            <person name="Kawai J."/>
            <person name="Hayashizaki Y."/>
        </authorList>
    </citation>
    <scope>NUCLEOTIDE SEQUENCE [LARGE SCALE MRNA]</scope>
    <source>
        <strain>C57BL/6J</strain>
        <tissue>Testis</tissue>
    </source>
</reference>
<reference key="2">
    <citation type="journal article" date="2004" name="Genome Res.">
        <title>The status, quality, and expansion of the NIH full-length cDNA project: the Mammalian Gene Collection (MGC).</title>
        <authorList>
            <consortium name="The MGC Project Team"/>
        </authorList>
    </citation>
    <scope>NUCLEOTIDE SEQUENCE [LARGE SCALE MRNA]</scope>
    <source>
        <tissue>Testis</tissue>
    </source>
</reference>
<reference key="3">
    <citation type="journal article" date="2021" name="Proc. Natl. Acad. Sci. U.S.A.">
        <title>ARMC12 regulates spatiotemporal mitochondrial dynamics during spermiogenesis and is required for male fertility.</title>
        <authorList>
            <person name="Shimada K."/>
            <person name="Park S."/>
            <person name="Miyata H."/>
            <person name="Yu Z."/>
            <person name="Morohoshi A."/>
            <person name="Oura S."/>
            <person name="Matzuk M.M."/>
            <person name="Ikawa M."/>
        </authorList>
    </citation>
    <scope>FUNCTION</scope>
    <scope>SUBCELLULAR LOCATION</scope>
    <scope>INTERACTION WITH TBC1D15; TBC1D21; GK2; IMMT; VDAC2 AND VDAC3</scope>
    <scope>DISRUPTION PHENOTYPE</scope>
    <scope>TISSUE SPECIFICITY</scope>
    <scope>DEVELOPMENTAL STAGE</scope>
</reference>
<reference key="4">
    <citation type="journal article" date="2023" name="J. Med. Genet.">
        <title>Biallelic mutations in ARMC12 cause asthenozoospermia and multiple midpiece defects in humans and mice.</title>
        <authorList>
            <person name="Liu W."/>
            <person name="Wei X."/>
            <person name="Liu X."/>
            <person name="Chen G."/>
            <person name="Zhang X."/>
            <person name="Liang X."/>
            <person name="Isachenko V."/>
            <person name="Sha Y."/>
            <person name="Wang Y."/>
        </authorList>
    </citation>
    <scope>DISRUPTION PHENOTYPE</scope>
    <scope>FUNCTION</scope>
</reference>
<proteinExistence type="evidence at protein level"/>
<comment type="function">
    <text evidence="1 3 4">Essential for male fertility and sperm mitochondrial sheath formation (PubMed:33536340, PubMed:35534203). Required for proper mitochondrial elongation and coiling along the flagellum during the formation of the mitochondrial sheath (PubMed:33536340). Facilitates the growth and aggressiveness of neuroblastoma cells (By similarity). Increases the EZH2 activity and H3K27me3 levels in a RBBP4-dependent manner, and facilitates the enrichment of polycomb repressive complex 2 and H3K27me3 on gene promoters, resulting in transcriptional repression of tumor suppressors affecting the proliferation, invasion, and metastasis of tumor cells (By similarity).</text>
</comment>
<comment type="subunit">
    <text evidence="1 3">Interacts with TBC1D15, TBC1D21, GK2 and IMMT (PubMed:33536340). Interacts with VDAC2 and VDAC3 in a TBC1D21-dependent manner (PubMed:33536340). Interacts (via ARM domains) with RBBP4 (By similarity).</text>
</comment>
<comment type="subcellular location">
    <subcellularLocation>
        <location evidence="1">Nucleus</location>
    </subcellularLocation>
    <subcellularLocation>
        <location evidence="3">Mitochondrion outer membrane</location>
        <topology evidence="3">Peripheral membrane protein</topology>
    </subcellularLocation>
</comment>
<comment type="tissue specificity">
    <text evidence="3">Testis-specific.</text>
</comment>
<comment type="developmental stage">
    <text evidence="3">Expression begins around postnatal day 20, which roughly corresponds to the haploid, round spermatid stage of spermatogenesis.</text>
</comment>
<comment type="disruption phenotype">
    <text evidence="3 4">Knockout male mice are infertile due to asthenozoospermia and abnormal sperm morphology (PubMed:33536340, PubMed:35534203). Mutant animals show no significant abnormalities in the gross appearance of the testis or epididymis compared with controls, but have multiple sperm mid-piece defects such as absent mitochondrial sheath, and scattered or forked axoneme (PubMed:35534203).</text>
</comment>
<sequence>MGKTIPRFLEQLDLIKSFVGLATGAGALYLLYKAVRTGLKCHPPLCSNSPICIARLAIERERHGRDSGEIRRLLNSLDCKQDEYTRSMILHNITRCVYLLEAEASSCTMDDIDLVADMLDEKDNSVKIQALNALKAFSGIRKFRLKIQEHCIKVLELISTIWDLELHVAGLRLLNNLPLPDYVHPQLRRVMPALMEIIQSDCILAQVQAVRLLSYLAQKNDLLYDILNCQVRPNFLNLFQSSQPGSLLFEVLVFAEHLSEGRNATHYRAVKWHYNEQSLHEALFGDESRLADRLLSLVIHPEEEVQIQACKVIVSLQCPQDLGSRPSSCRPSHSCFKTGK</sequence>
<organism>
    <name type="scientific">Mus musculus</name>
    <name type="common">Mouse</name>
    <dbReference type="NCBI Taxonomy" id="10090"/>
    <lineage>
        <taxon>Eukaryota</taxon>
        <taxon>Metazoa</taxon>
        <taxon>Chordata</taxon>
        <taxon>Craniata</taxon>
        <taxon>Vertebrata</taxon>
        <taxon>Euteleostomi</taxon>
        <taxon>Mammalia</taxon>
        <taxon>Eutheria</taxon>
        <taxon>Euarchontoglires</taxon>
        <taxon>Glires</taxon>
        <taxon>Rodentia</taxon>
        <taxon>Myomorpha</taxon>
        <taxon>Muroidea</taxon>
        <taxon>Muridae</taxon>
        <taxon>Murinae</taxon>
        <taxon>Mus</taxon>
        <taxon>Mus</taxon>
    </lineage>
</organism>
<accession>Q80X86</accession>
<accession>Q9D564</accession>
<accession>Q9DAN7</accession>
<name>ARM12_MOUSE</name>
<gene>
    <name type="primary">Armc12</name>
</gene>
<protein>
    <recommendedName>
        <fullName>Armadillo repeat-containing protein 12</fullName>
    </recommendedName>
</protein>